<comment type="function">
    <text evidence="1">Specifically methylates the N4 position of cytidine in position 1402 (C1402) of 16S rRNA.</text>
</comment>
<comment type="catalytic activity">
    <reaction evidence="1">
        <text>cytidine(1402) in 16S rRNA + S-adenosyl-L-methionine = N(4)-methylcytidine(1402) in 16S rRNA + S-adenosyl-L-homocysteine + H(+)</text>
        <dbReference type="Rhea" id="RHEA:42928"/>
        <dbReference type="Rhea" id="RHEA-COMP:10286"/>
        <dbReference type="Rhea" id="RHEA-COMP:10287"/>
        <dbReference type="ChEBI" id="CHEBI:15378"/>
        <dbReference type="ChEBI" id="CHEBI:57856"/>
        <dbReference type="ChEBI" id="CHEBI:59789"/>
        <dbReference type="ChEBI" id="CHEBI:74506"/>
        <dbReference type="ChEBI" id="CHEBI:82748"/>
        <dbReference type="EC" id="2.1.1.199"/>
    </reaction>
</comment>
<comment type="subcellular location">
    <subcellularLocation>
        <location evidence="1">Cytoplasm</location>
    </subcellularLocation>
</comment>
<comment type="similarity">
    <text evidence="1">Belongs to the methyltransferase superfamily. RsmH family.</text>
</comment>
<feature type="chain" id="PRO_0000223563" description="Ribosomal RNA small subunit methyltransferase H">
    <location>
        <begin position="1"/>
        <end position="313"/>
    </location>
</feature>
<feature type="binding site" evidence="1">
    <location>
        <begin position="35"/>
        <end position="37"/>
    </location>
    <ligand>
        <name>S-adenosyl-L-methionine</name>
        <dbReference type="ChEBI" id="CHEBI:59789"/>
    </ligand>
</feature>
<feature type="binding site" evidence="1">
    <location>
        <position position="55"/>
    </location>
    <ligand>
        <name>S-adenosyl-L-methionine</name>
        <dbReference type="ChEBI" id="CHEBI:59789"/>
    </ligand>
</feature>
<feature type="binding site" evidence="1">
    <location>
        <position position="79"/>
    </location>
    <ligand>
        <name>S-adenosyl-L-methionine</name>
        <dbReference type="ChEBI" id="CHEBI:59789"/>
    </ligand>
</feature>
<feature type="binding site" evidence="1">
    <location>
        <position position="101"/>
    </location>
    <ligand>
        <name>S-adenosyl-L-methionine</name>
        <dbReference type="ChEBI" id="CHEBI:59789"/>
    </ligand>
</feature>
<feature type="binding site" evidence="1">
    <location>
        <position position="108"/>
    </location>
    <ligand>
        <name>S-adenosyl-L-methionine</name>
        <dbReference type="ChEBI" id="CHEBI:59789"/>
    </ligand>
</feature>
<proteinExistence type="inferred from homology"/>
<organism>
    <name type="scientific">Shigella boydii serotype 4 (strain Sb227)</name>
    <dbReference type="NCBI Taxonomy" id="300268"/>
    <lineage>
        <taxon>Bacteria</taxon>
        <taxon>Pseudomonadati</taxon>
        <taxon>Pseudomonadota</taxon>
        <taxon>Gammaproteobacteria</taxon>
        <taxon>Enterobacterales</taxon>
        <taxon>Enterobacteriaceae</taxon>
        <taxon>Shigella</taxon>
    </lineage>
</organism>
<gene>
    <name evidence="1" type="primary">rsmH</name>
    <name type="synonym">mraW</name>
    <name type="ordered locus">SBO_0070</name>
</gene>
<protein>
    <recommendedName>
        <fullName evidence="1">Ribosomal RNA small subunit methyltransferase H</fullName>
        <ecNumber evidence="1">2.1.1.199</ecNumber>
    </recommendedName>
    <alternativeName>
        <fullName evidence="1">16S rRNA m(4)C1402 methyltransferase</fullName>
    </alternativeName>
    <alternativeName>
        <fullName evidence="1">rRNA (cytosine-N(4)-)-methyltransferase RsmH</fullName>
    </alternativeName>
</protein>
<name>RSMH_SHIBS</name>
<keyword id="KW-0963">Cytoplasm</keyword>
<keyword id="KW-0489">Methyltransferase</keyword>
<keyword id="KW-0698">rRNA processing</keyword>
<keyword id="KW-0949">S-adenosyl-L-methionine</keyword>
<keyword id="KW-0808">Transferase</keyword>
<accession>Q326F3</accession>
<reference key="1">
    <citation type="journal article" date="2005" name="Nucleic Acids Res.">
        <title>Genome dynamics and diversity of Shigella species, the etiologic agents of bacillary dysentery.</title>
        <authorList>
            <person name="Yang F."/>
            <person name="Yang J."/>
            <person name="Zhang X."/>
            <person name="Chen L."/>
            <person name="Jiang Y."/>
            <person name="Yan Y."/>
            <person name="Tang X."/>
            <person name="Wang J."/>
            <person name="Xiong Z."/>
            <person name="Dong J."/>
            <person name="Xue Y."/>
            <person name="Zhu Y."/>
            <person name="Xu X."/>
            <person name="Sun L."/>
            <person name="Chen S."/>
            <person name="Nie H."/>
            <person name="Peng J."/>
            <person name="Xu J."/>
            <person name="Wang Y."/>
            <person name="Yuan Z."/>
            <person name="Wen Y."/>
            <person name="Yao Z."/>
            <person name="Shen Y."/>
            <person name="Qiang B."/>
            <person name="Hou Y."/>
            <person name="Yu J."/>
            <person name="Jin Q."/>
        </authorList>
    </citation>
    <scope>NUCLEOTIDE SEQUENCE [LARGE SCALE GENOMIC DNA]</scope>
    <source>
        <strain>Sb227</strain>
    </source>
</reference>
<sequence length="313" mass="34878">MMENYKHTTVLLDEAVNGLNIRPDGIYIDGTFGRGGHSRLILSQLGEEGRLLAIDRDPQAIAVAKTIDDPRFSIIHGPFSALGEYVAERDLIGKIDGILLDLGVSSPQLDDAERGFSFMRDGPLDMRMDPTRGQSAAEWLQTAEEADIAWVLKTYGEERFAKRIARAIVERNREQPMTRTKELAEVVAAATPVKDKFKHPATRTFQAVRIWVNSELEEIEQALKSSLNVLAPGGRLSIISFHSLEDRIVKRFMRENSRGPQVPAGLPMTEEQLKKLGGRQLRALGKLMPGEEEVAENPRARSSVLRIAERTNA</sequence>
<dbReference type="EC" id="2.1.1.199" evidence="1"/>
<dbReference type="EMBL" id="CP000036">
    <property type="protein sequence ID" value="ABB64805.1"/>
    <property type="molecule type" value="Genomic_DNA"/>
</dbReference>
<dbReference type="RefSeq" id="WP_000970479.1">
    <property type="nucleotide sequence ID" value="NC_007613.1"/>
</dbReference>
<dbReference type="SMR" id="Q326F3"/>
<dbReference type="GeneID" id="86862592"/>
<dbReference type="KEGG" id="sbo:SBO_0070"/>
<dbReference type="HOGENOM" id="CLU_038422_2_0_6"/>
<dbReference type="Proteomes" id="UP000007067">
    <property type="component" value="Chromosome"/>
</dbReference>
<dbReference type="GO" id="GO:0005737">
    <property type="term" value="C:cytoplasm"/>
    <property type="evidence" value="ECO:0007669"/>
    <property type="project" value="UniProtKB-SubCell"/>
</dbReference>
<dbReference type="GO" id="GO:0071424">
    <property type="term" value="F:rRNA (cytosine-N4-)-methyltransferase activity"/>
    <property type="evidence" value="ECO:0007669"/>
    <property type="project" value="UniProtKB-UniRule"/>
</dbReference>
<dbReference type="GO" id="GO:0070475">
    <property type="term" value="P:rRNA base methylation"/>
    <property type="evidence" value="ECO:0007669"/>
    <property type="project" value="UniProtKB-UniRule"/>
</dbReference>
<dbReference type="FunFam" id="1.10.150.170:FF:000001">
    <property type="entry name" value="Ribosomal RNA small subunit methyltransferase H"/>
    <property type="match status" value="1"/>
</dbReference>
<dbReference type="Gene3D" id="1.10.150.170">
    <property type="entry name" value="Putative methyltransferase TM0872, insert domain"/>
    <property type="match status" value="1"/>
</dbReference>
<dbReference type="Gene3D" id="3.40.50.150">
    <property type="entry name" value="Vaccinia Virus protein VP39"/>
    <property type="match status" value="1"/>
</dbReference>
<dbReference type="HAMAP" id="MF_01007">
    <property type="entry name" value="16SrRNA_methyltr_H"/>
    <property type="match status" value="1"/>
</dbReference>
<dbReference type="InterPro" id="IPR002903">
    <property type="entry name" value="RsmH"/>
</dbReference>
<dbReference type="InterPro" id="IPR023397">
    <property type="entry name" value="SAM-dep_MeTrfase_MraW_recog"/>
</dbReference>
<dbReference type="InterPro" id="IPR029063">
    <property type="entry name" value="SAM-dependent_MTases_sf"/>
</dbReference>
<dbReference type="NCBIfam" id="TIGR00006">
    <property type="entry name" value="16S rRNA (cytosine(1402)-N(4))-methyltransferase RsmH"/>
    <property type="match status" value="1"/>
</dbReference>
<dbReference type="PANTHER" id="PTHR11265:SF0">
    <property type="entry name" value="12S RRNA N4-METHYLCYTIDINE METHYLTRANSFERASE"/>
    <property type="match status" value="1"/>
</dbReference>
<dbReference type="PANTHER" id="PTHR11265">
    <property type="entry name" value="S-ADENOSYL-METHYLTRANSFERASE MRAW"/>
    <property type="match status" value="1"/>
</dbReference>
<dbReference type="Pfam" id="PF01795">
    <property type="entry name" value="Methyltransf_5"/>
    <property type="match status" value="1"/>
</dbReference>
<dbReference type="PIRSF" id="PIRSF004486">
    <property type="entry name" value="MraW"/>
    <property type="match status" value="1"/>
</dbReference>
<dbReference type="SUPFAM" id="SSF81799">
    <property type="entry name" value="Putative methyltransferase TM0872, insert domain"/>
    <property type="match status" value="1"/>
</dbReference>
<dbReference type="SUPFAM" id="SSF53335">
    <property type="entry name" value="S-adenosyl-L-methionine-dependent methyltransferases"/>
    <property type="match status" value="1"/>
</dbReference>
<evidence type="ECO:0000255" key="1">
    <source>
        <dbReference type="HAMAP-Rule" id="MF_01007"/>
    </source>
</evidence>